<proteinExistence type="inferred from homology"/>
<keyword id="KW-0413">Isomerase</keyword>
<keyword id="KW-1185">Reference proteome</keyword>
<keyword id="KW-0819">tRNA processing</keyword>
<evidence type="ECO:0000255" key="1">
    <source>
        <dbReference type="HAMAP-Rule" id="MF_00171"/>
    </source>
</evidence>
<accession>Q5QUE5</accession>
<gene>
    <name evidence="1" type="primary">truA</name>
    <name type="ordered locus">IL1017</name>
</gene>
<dbReference type="EC" id="5.4.99.12" evidence="1"/>
<dbReference type="EMBL" id="AE017340">
    <property type="protein sequence ID" value="AAV81857.1"/>
    <property type="molecule type" value="Genomic_DNA"/>
</dbReference>
<dbReference type="RefSeq" id="WP_011234268.1">
    <property type="nucleotide sequence ID" value="NC_006512.1"/>
</dbReference>
<dbReference type="SMR" id="Q5QUE5"/>
<dbReference type="STRING" id="283942.IL1017"/>
<dbReference type="GeneID" id="41336183"/>
<dbReference type="KEGG" id="ilo:IL1017"/>
<dbReference type="eggNOG" id="COG0101">
    <property type="taxonomic scope" value="Bacteria"/>
</dbReference>
<dbReference type="HOGENOM" id="CLU_014673_0_2_6"/>
<dbReference type="OrthoDB" id="9811823at2"/>
<dbReference type="Proteomes" id="UP000001171">
    <property type="component" value="Chromosome"/>
</dbReference>
<dbReference type="GO" id="GO:0003723">
    <property type="term" value="F:RNA binding"/>
    <property type="evidence" value="ECO:0007669"/>
    <property type="project" value="InterPro"/>
</dbReference>
<dbReference type="GO" id="GO:0160147">
    <property type="term" value="F:tRNA pseudouridine(38-40) synthase activity"/>
    <property type="evidence" value="ECO:0007669"/>
    <property type="project" value="UniProtKB-EC"/>
</dbReference>
<dbReference type="GO" id="GO:0031119">
    <property type="term" value="P:tRNA pseudouridine synthesis"/>
    <property type="evidence" value="ECO:0007669"/>
    <property type="project" value="UniProtKB-UniRule"/>
</dbReference>
<dbReference type="CDD" id="cd02570">
    <property type="entry name" value="PseudoU_synth_EcTruA"/>
    <property type="match status" value="1"/>
</dbReference>
<dbReference type="FunFam" id="3.30.70.580:FF:000001">
    <property type="entry name" value="tRNA pseudouridine synthase A"/>
    <property type="match status" value="1"/>
</dbReference>
<dbReference type="Gene3D" id="3.30.70.660">
    <property type="entry name" value="Pseudouridine synthase I, catalytic domain, C-terminal subdomain"/>
    <property type="match status" value="1"/>
</dbReference>
<dbReference type="Gene3D" id="3.30.70.580">
    <property type="entry name" value="Pseudouridine synthase I, catalytic domain, N-terminal subdomain"/>
    <property type="match status" value="1"/>
</dbReference>
<dbReference type="HAMAP" id="MF_00171">
    <property type="entry name" value="TruA"/>
    <property type="match status" value="1"/>
</dbReference>
<dbReference type="InterPro" id="IPR020103">
    <property type="entry name" value="PsdUridine_synth_cat_dom_sf"/>
</dbReference>
<dbReference type="InterPro" id="IPR001406">
    <property type="entry name" value="PsdUridine_synth_TruA"/>
</dbReference>
<dbReference type="InterPro" id="IPR020097">
    <property type="entry name" value="PsdUridine_synth_TruA_a/b_dom"/>
</dbReference>
<dbReference type="InterPro" id="IPR020095">
    <property type="entry name" value="PsdUridine_synth_TruA_C"/>
</dbReference>
<dbReference type="InterPro" id="IPR020094">
    <property type="entry name" value="TruA/RsuA/RluB/E/F_N"/>
</dbReference>
<dbReference type="NCBIfam" id="TIGR00071">
    <property type="entry name" value="hisT_truA"/>
    <property type="match status" value="1"/>
</dbReference>
<dbReference type="PANTHER" id="PTHR11142">
    <property type="entry name" value="PSEUDOURIDYLATE SYNTHASE"/>
    <property type="match status" value="1"/>
</dbReference>
<dbReference type="PANTHER" id="PTHR11142:SF0">
    <property type="entry name" value="TRNA PSEUDOURIDINE SYNTHASE-LIKE 1"/>
    <property type="match status" value="1"/>
</dbReference>
<dbReference type="Pfam" id="PF01416">
    <property type="entry name" value="PseudoU_synth_1"/>
    <property type="match status" value="2"/>
</dbReference>
<dbReference type="PIRSF" id="PIRSF001430">
    <property type="entry name" value="tRNA_psdUrid_synth"/>
    <property type="match status" value="1"/>
</dbReference>
<dbReference type="SUPFAM" id="SSF55120">
    <property type="entry name" value="Pseudouridine synthase"/>
    <property type="match status" value="1"/>
</dbReference>
<feature type="chain" id="PRO_0000057392" description="tRNA pseudouridine synthase A">
    <location>
        <begin position="1"/>
        <end position="261"/>
    </location>
</feature>
<feature type="active site" description="Nucleophile" evidence="1">
    <location>
        <position position="51"/>
    </location>
</feature>
<feature type="binding site" evidence="1">
    <location>
        <position position="109"/>
    </location>
    <ligand>
        <name>substrate</name>
    </ligand>
</feature>
<reference key="1">
    <citation type="journal article" date="2004" name="Proc. Natl. Acad. Sci. U.S.A.">
        <title>Genome sequence of the deep-sea gamma-proteobacterium Idiomarina loihiensis reveals amino acid fermentation as a source of carbon and energy.</title>
        <authorList>
            <person name="Hou S."/>
            <person name="Saw J.H."/>
            <person name="Lee K.S."/>
            <person name="Freitas T.A."/>
            <person name="Belisle C."/>
            <person name="Kawarabayasi Y."/>
            <person name="Donachie S.P."/>
            <person name="Pikina A."/>
            <person name="Galperin M.Y."/>
            <person name="Koonin E.V."/>
            <person name="Makarova K.S."/>
            <person name="Omelchenko M.V."/>
            <person name="Sorokin A."/>
            <person name="Wolf Y.I."/>
            <person name="Li Q.X."/>
            <person name="Keum Y.S."/>
            <person name="Campbell S."/>
            <person name="Denery J."/>
            <person name="Aizawa S."/>
            <person name="Shibata S."/>
            <person name="Malahoff A."/>
            <person name="Alam M."/>
        </authorList>
    </citation>
    <scope>NUCLEOTIDE SEQUENCE [LARGE SCALE GENOMIC DNA]</scope>
    <source>
        <strain>ATCC BAA-735 / DSM 15497 / L2-TR</strain>
    </source>
</reference>
<organism>
    <name type="scientific">Idiomarina loihiensis (strain ATCC BAA-735 / DSM 15497 / L2-TR)</name>
    <dbReference type="NCBI Taxonomy" id="283942"/>
    <lineage>
        <taxon>Bacteria</taxon>
        <taxon>Pseudomonadati</taxon>
        <taxon>Pseudomonadota</taxon>
        <taxon>Gammaproteobacteria</taxon>
        <taxon>Alteromonadales</taxon>
        <taxon>Idiomarinaceae</taxon>
        <taxon>Idiomarina</taxon>
    </lineage>
</organism>
<protein>
    <recommendedName>
        <fullName evidence="1">tRNA pseudouridine synthase A</fullName>
        <ecNumber evidence="1">5.4.99.12</ecNumber>
    </recommendedName>
    <alternativeName>
        <fullName evidence="1">tRNA pseudouridine(38-40) synthase</fullName>
    </alternativeName>
    <alternativeName>
        <fullName evidence="1">tRNA pseudouridylate synthase I</fullName>
    </alternativeName>
    <alternativeName>
        <fullName evidence="1">tRNA-uridine isomerase I</fullName>
    </alternativeName>
</protein>
<comment type="function">
    <text evidence="1">Formation of pseudouridine at positions 38, 39 and 40 in the anticodon stem and loop of transfer RNAs.</text>
</comment>
<comment type="catalytic activity">
    <reaction evidence="1">
        <text>uridine(38/39/40) in tRNA = pseudouridine(38/39/40) in tRNA</text>
        <dbReference type="Rhea" id="RHEA:22376"/>
        <dbReference type="Rhea" id="RHEA-COMP:10085"/>
        <dbReference type="Rhea" id="RHEA-COMP:10087"/>
        <dbReference type="ChEBI" id="CHEBI:65314"/>
        <dbReference type="ChEBI" id="CHEBI:65315"/>
        <dbReference type="EC" id="5.4.99.12"/>
    </reaction>
</comment>
<comment type="subunit">
    <text evidence="1">Homodimer.</text>
</comment>
<comment type="similarity">
    <text evidence="1">Belongs to the tRNA pseudouridine synthase TruA family.</text>
</comment>
<name>TRUA_IDILO</name>
<sequence>MRMALCLEYDGSRYYGWQRQREVASVQQCVEEALSKIANAPVEVTCAGRTDAGVHATAQIVHFDVPVPRADVAWTLGVNSNLPAGIAVRWAREVDSEFSARFSATSRRYRYIIANTRFRPGIHSAGVSHYHQPLDAEVMQEAAQALVGEHDFTAFRASHCQSHTPFRKVSDLTVERRGDYIIVDISANAFLHHMVRNIVGSLIVVGQHLQPPDWIGELLRQKDRTKAAATAKPGGLYLVAVTYPEHYNIPDAPLGPLWLGD</sequence>